<feature type="chain" id="PRO_0000218493" description="Putative glutamine amidotransferase-like protein YvdE">
    <location>
        <begin position="1"/>
        <end position="236"/>
    </location>
</feature>
<feature type="domain" description="Glutamine amidotransferase type-1" evidence="1">
    <location>
        <begin position="17"/>
        <end position="236"/>
    </location>
</feature>
<proteinExistence type="predicted"/>
<dbReference type="EMBL" id="AE005176">
    <property type="protein sequence ID" value="AAK06148.1"/>
    <property type="molecule type" value="Genomic_DNA"/>
</dbReference>
<dbReference type="PIR" id="B86881">
    <property type="entry name" value="B86881"/>
</dbReference>
<dbReference type="RefSeq" id="NP_268207.1">
    <property type="nucleotide sequence ID" value="NC_002662.1"/>
</dbReference>
<dbReference type="RefSeq" id="WP_004254447.1">
    <property type="nucleotide sequence ID" value="NC_002662.1"/>
</dbReference>
<dbReference type="SMR" id="Q9CE00"/>
<dbReference type="MEROPS" id="C26.A28"/>
<dbReference type="PaxDb" id="272623-L120396"/>
<dbReference type="EnsemblBacteria" id="AAK06148">
    <property type="protein sequence ID" value="AAK06148"/>
    <property type="gene ID" value="L120396"/>
</dbReference>
<dbReference type="KEGG" id="lla:L120396"/>
<dbReference type="PATRIC" id="fig|272623.7.peg.2207"/>
<dbReference type="eggNOG" id="COG2071">
    <property type="taxonomic scope" value="Bacteria"/>
</dbReference>
<dbReference type="HOGENOM" id="CLU_030756_2_1_9"/>
<dbReference type="OrthoDB" id="9813383at2"/>
<dbReference type="Proteomes" id="UP000002196">
    <property type="component" value="Chromosome"/>
</dbReference>
<dbReference type="GO" id="GO:0005829">
    <property type="term" value="C:cytosol"/>
    <property type="evidence" value="ECO:0007669"/>
    <property type="project" value="TreeGrafter"/>
</dbReference>
<dbReference type="GO" id="GO:0033969">
    <property type="term" value="F:gamma-glutamyl-gamma-aminobutyrate hydrolase activity"/>
    <property type="evidence" value="ECO:0007669"/>
    <property type="project" value="TreeGrafter"/>
</dbReference>
<dbReference type="GO" id="GO:0016740">
    <property type="term" value="F:transferase activity"/>
    <property type="evidence" value="ECO:0007669"/>
    <property type="project" value="UniProtKB-KW"/>
</dbReference>
<dbReference type="GO" id="GO:0006598">
    <property type="term" value="P:polyamine catabolic process"/>
    <property type="evidence" value="ECO:0007669"/>
    <property type="project" value="TreeGrafter"/>
</dbReference>
<dbReference type="CDD" id="cd01745">
    <property type="entry name" value="GATase1_2"/>
    <property type="match status" value="1"/>
</dbReference>
<dbReference type="Gene3D" id="3.40.50.880">
    <property type="match status" value="1"/>
</dbReference>
<dbReference type="InterPro" id="IPR029062">
    <property type="entry name" value="Class_I_gatase-like"/>
</dbReference>
<dbReference type="InterPro" id="IPR011697">
    <property type="entry name" value="Peptidase_C26"/>
</dbReference>
<dbReference type="InterPro" id="IPR044668">
    <property type="entry name" value="PuuD-like"/>
</dbReference>
<dbReference type="PANTHER" id="PTHR43235">
    <property type="entry name" value="GLUTAMINE AMIDOTRANSFERASE PB2B2.05-RELATED"/>
    <property type="match status" value="1"/>
</dbReference>
<dbReference type="PANTHER" id="PTHR43235:SF1">
    <property type="entry name" value="GLUTAMINE AMIDOTRANSFERASE PB2B2.05-RELATED"/>
    <property type="match status" value="1"/>
</dbReference>
<dbReference type="Pfam" id="PF07722">
    <property type="entry name" value="Peptidase_C26"/>
    <property type="match status" value="1"/>
</dbReference>
<dbReference type="SUPFAM" id="SSF52317">
    <property type="entry name" value="Class I glutamine amidotransferase-like"/>
    <property type="match status" value="1"/>
</dbReference>
<dbReference type="PROSITE" id="PS51273">
    <property type="entry name" value="GATASE_TYPE_1"/>
    <property type="match status" value="1"/>
</dbReference>
<sequence length="236" mass="26511">MAIIGILGTPYNTVEQSPFWWNKVSYTRQSFIDVFQDLGHTVIILPVDKTENIKNYLTLVDKIVLTGGADVSPYLYGEEPNAKLGTTDPIRDRFELATIKAALEANKPILGVCRGLQLLNVYFGGRLYQDLSQTSSQIKHLQSPTPQEIPTHHISVEQESALGFLPENYMVNSFHHQVIKDLGQGLTAIAHGNDGLVEAIENKEKHVLAVQWHPECTWETEHFDKKIFEIFANGTI</sequence>
<reference key="1">
    <citation type="journal article" date="2001" name="Genome Res.">
        <title>The complete genome sequence of the lactic acid bacterium Lactococcus lactis ssp. lactis IL1403.</title>
        <authorList>
            <person name="Bolotin A."/>
            <person name="Wincker P."/>
            <person name="Mauger S."/>
            <person name="Jaillon O."/>
            <person name="Malarme K."/>
            <person name="Weissenbach J."/>
            <person name="Ehrlich S.D."/>
            <person name="Sorokin A."/>
        </authorList>
    </citation>
    <scope>NUCLEOTIDE SEQUENCE [LARGE SCALE GENOMIC DNA]</scope>
    <source>
        <strain>IL1403</strain>
    </source>
</reference>
<keyword id="KW-0315">Glutamine amidotransferase</keyword>
<keyword id="KW-1185">Reference proteome</keyword>
<keyword id="KW-0808">Transferase</keyword>
<evidence type="ECO:0000255" key="1">
    <source>
        <dbReference type="PROSITE-ProRule" id="PRU00605"/>
    </source>
</evidence>
<organism>
    <name type="scientific">Lactococcus lactis subsp. lactis (strain IL1403)</name>
    <name type="common">Streptococcus lactis</name>
    <dbReference type="NCBI Taxonomy" id="272623"/>
    <lineage>
        <taxon>Bacteria</taxon>
        <taxon>Bacillati</taxon>
        <taxon>Bacillota</taxon>
        <taxon>Bacilli</taxon>
        <taxon>Lactobacillales</taxon>
        <taxon>Streptococcaceae</taxon>
        <taxon>Lactococcus</taxon>
    </lineage>
</organism>
<gene>
    <name type="primary">yvdE</name>
    <name type="ordered locus">LL2050</name>
    <name type="ORF">L120396</name>
</gene>
<protein>
    <recommendedName>
        <fullName>Putative glutamine amidotransferase-like protein YvdE</fullName>
    </recommendedName>
</protein>
<name>YVDE_LACLA</name>
<accession>Q9CE00</accession>